<dbReference type="EC" id="4.3.2.1" evidence="1"/>
<dbReference type="EMBL" id="CP001339">
    <property type="protein sequence ID" value="ACL71137.1"/>
    <property type="molecule type" value="Genomic_DNA"/>
</dbReference>
<dbReference type="RefSeq" id="WP_012636626.1">
    <property type="nucleotide sequence ID" value="NC_011901.1"/>
</dbReference>
<dbReference type="SMR" id="B8GSV2"/>
<dbReference type="STRING" id="396588.Tgr7_0033"/>
<dbReference type="KEGG" id="tgr:Tgr7_0033"/>
<dbReference type="eggNOG" id="COG0165">
    <property type="taxonomic scope" value="Bacteria"/>
</dbReference>
<dbReference type="HOGENOM" id="CLU_027272_2_3_6"/>
<dbReference type="OrthoDB" id="9769623at2"/>
<dbReference type="UniPathway" id="UPA00068">
    <property type="reaction ID" value="UER00114"/>
</dbReference>
<dbReference type="Proteomes" id="UP000002383">
    <property type="component" value="Chromosome"/>
</dbReference>
<dbReference type="GO" id="GO:0005829">
    <property type="term" value="C:cytosol"/>
    <property type="evidence" value="ECO:0007669"/>
    <property type="project" value="TreeGrafter"/>
</dbReference>
<dbReference type="GO" id="GO:0004056">
    <property type="term" value="F:argininosuccinate lyase activity"/>
    <property type="evidence" value="ECO:0007669"/>
    <property type="project" value="UniProtKB-UniRule"/>
</dbReference>
<dbReference type="GO" id="GO:0042450">
    <property type="term" value="P:arginine biosynthetic process via ornithine"/>
    <property type="evidence" value="ECO:0007669"/>
    <property type="project" value="InterPro"/>
</dbReference>
<dbReference type="GO" id="GO:0006526">
    <property type="term" value="P:L-arginine biosynthetic process"/>
    <property type="evidence" value="ECO:0007669"/>
    <property type="project" value="UniProtKB-UniRule"/>
</dbReference>
<dbReference type="CDD" id="cd01359">
    <property type="entry name" value="Argininosuccinate_lyase"/>
    <property type="match status" value="1"/>
</dbReference>
<dbReference type="FunFam" id="1.10.275.10:FF:000002">
    <property type="entry name" value="Argininosuccinate lyase"/>
    <property type="match status" value="1"/>
</dbReference>
<dbReference type="FunFam" id="1.10.40.30:FF:000001">
    <property type="entry name" value="Argininosuccinate lyase"/>
    <property type="match status" value="1"/>
</dbReference>
<dbReference type="FunFam" id="1.20.200.10:FF:000015">
    <property type="entry name" value="argininosuccinate lyase isoform X2"/>
    <property type="match status" value="1"/>
</dbReference>
<dbReference type="Gene3D" id="1.10.40.30">
    <property type="entry name" value="Fumarase/aspartase (C-terminal domain)"/>
    <property type="match status" value="1"/>
</dbReference>
<dbReference type="Gene3D" id="1.20.200.10">
    <property type="entry name" value="Fumarase/aspartase (Central domain)"/>
    <property type="match status" value="1"/>
</dbReference>
<dbReference type="Gene3D" id="1.10.275.10">
    <property type="entry name" value="Fumarase/aspartase (N-terminal domain)"/>
    <property type="match status" value="1"/>
</dbReference>
<dbReference type="HAMAP" id="MF_00006">
    <property type="entry name" value="Arg_succ_lyase"/>
    <property type="match status" value="1"/>
</dbReference>
<dbReference type="InterPro" id="IPR029419">
    <property type="entry name" value="Arg_succ_lyase_C"/>
</dbReference>
<dbReference type="InterPro" id="IPR009049">
    <property type="entry name" value="Argininosuccinate_lyase"/>
</dbReference>
<dbReference type="InterPro" id="IPR024083">
    <property type="entry name" value="Fumarase/histidase_N"/>
</dbReference>
<dbReference type="InterPro" id="IPR020557">
    <property type="entry name" value="Fumarate_lyase_CS"/>
</dbReference>
<dbReference type="InterPro" id="IPR000362">
    <property type="entry name" value="Fumarate_lyase_fam"/>
</dbReference>
<dbReference type="InterPro" id="IPR022761">
    <property type="entry name" value="Fumarate_lyase_N"/>
</dbReference>
<dbReference type="InterPro" id="IPR008948">
    <property type="entry name" value="L-Aspartase-like"/>
</dbReference>
<dbReference type="NCBIfam" id="TIGR00838">
    <property type="entry name" value="argH"/>
    <property type="match status" value="1"/>
</dbReference>
<dbReference type="PANTHER" id="PTHR43814">
    <property type="entry name" value="ARGININOSUCCINATE LYASE"/>
    <property type="match status" value="1"/>
</dbReference>
<dbReference type="PANTHER" id="PTHR43814:SF1">
    <property type="entry name" value="ARGININOSUCCINATE LYASE"/>
    <property type="match status" value="1"/>
</dbReference>
<dbReference type="Pfam" id="PF14698">
    <property type="entry name" value="ASL_C2"/>
    <property type="match status" value="1"/>
</dbReference>
<dbReference type="Pfam" id="PF00206">
    <property type="entry name" value="Lyase_1"/>
    <property type="match status" value="1"/>
</dbReference>
<dbReference type="PRINTS" id="PR00145">
    <property type="entry name" value="ARGSUCLYASE"/>
</dbReference>
<dbReference type="PRINTS" id="PR00149">
    <property type="entry name" value="FUMRATELYASE"/>
</dbReference>
<dbReference type="SUPFAM" id="SSF48557">
    <property type="entry name" value="L-aspartase-like"/>
    <property type="match status" value="1"/>
</dbReference>
<dbReference type="PROSITE" id="PS00163">
    <property type="entry name" value="FUMARATE_LYASES"/>
    <property type="match status" value="1"/>
</dbReference>
<proteinExistence type="inferred from homology"/>
<sequence>MSTQHSGDKLWGGRFSEPTDAFVEAFTASVSFDQRLYRHDIQGSKAHARMLARVGVLTEEECDKIHDGLDAILADIERGDFAWSVELEDVHMNVEARLIERIGDVGKKLHTGRSRNDQVATDIRLYLREAIDALMQEIRRLQGGLVDLAEREAQTIMPGFTHLQTAQPVTFGHHMMAWYEMLERDHGRLADCRKRVNVLPLGAAALAGTPYPLDRHYTAELLGFDAVTDNSLDAVSDRDFAIEFCAAGALIMTHLSRFSEELILWASAQFGFVDLPDRFCTGSSIMPQKKNPDVPELVRGKTGRANGNLIALLTLMKGQPLAYNKDNQEDKEPLFDTVDTLAGSLRAFADMVPHIQVRAEVMRAAASRGFATATDLADYLVRRGMPFRDAHEVVGRAVRHGVETGKDLAEMSLDELRKFSKTIEQDVFEVLTLEGSVAARNVHGGTAPAQVRARIRAARAKLMPAKG</sequence>
<protein>
    <recommendedName>
        <fullName evidence="1">Argininosuccinate lyase</fullName>
        <shortName evidence="1">ASAL</shortName>
        <ecNumber evidence="1">4.3.2.1</ecNumber>
    </recommendedName>
    <alternativeName>
        <fullName evidence="1">Arginosuccinase</fullName>
    </alternativeName>
</protein>
<accession>B8GSV2</accession>
<organism>
    <name type="scientific">Thioalkalivibrio sulfidiphilus (strain HL-EbGR7)</name>
    <dbReference type="NCBI Taxonomy" id="396588"/>
    <lineage>
        <taxon>Bacteria</taxon>
        <taxon>Pseudomonadati</taxon>
        <taxon>Pseudomonadota</taxon>
        <taxon>Gammaproteobacteria</taxon>
        <taxon>Chromatiales</taxon>
        <taxon>Ectothiorhodospiraceae</taxon>
        <taxon>Thioalkalivibrio</taxon>
    </lineage>
</organism>
<name>ARLY_THISH</name>
<keyword id="KW-0028">Amino-acid biosynthesis</keyword>
<keyword id="KW-0055">Arginine biosynthesis</keyword>
<keyword id="KW-0963">Cytoplasm</keyword>
<keyword id="KW-0456">Lyase</keyword>
<keyword id="KW-1185">Reference proteome</keyword>
<reference key="1">
    <citation type="journal article" date="2011" name="Stand. Genomic Sci.">
        <title>Complete genome sequence of 'Thioalkalivibrio sulfidophilus' HL-EbGr7.</title>
        <authorList>
            <person name="Muyzer G."/>
            <person name="Sorokin D.Y."/>
            <person name="Mavromatis K."/>
            <person name="Lapidus A."/>
            <person name="Clum A."/>
            <person name="Ivanova N."/>
            <person name="Pati A."/>
            <person name="d'Haeseleer P."/>
            <person name="Woyke T."/>
            <person name="Kyrpides N.C."/>
        </authorList>
    </citation>
    <scope>NUCLEOTIDE SEQUENCE [LARGE SCALE GENOMIC DNA]</scope>
    <source>
        <strain>HL-EbGR7</strain>
    </source>
</reference>
<gene>
    <name evidence="1" type="primary">argH</name>
    <name type="ordered locus">Tgr7_0033</name>
</gene>
<comment type="catalytic activity">
    <reaction evidence="1">
        <text>2-(N(omega)-L-arginino)succinate = fumarate + L-arginine</text>
        <dbReference type="Rhea" id="RHEA:24020"/>
        <dbReference type="ChEBI" id="CHEBI:29806"/>
        <dbReference type="ChEBI" id="CHEBI:32682"/>
        <dbReference type="ChEBI" id="CHEBI:57472"/>
        <dbReference type="EC" id="4.3.2.1"/>
    </reaction>
</comment>
<comment type="pathway">
    <text evidence="1">Amino-acid biosynthesis; L-arginine biosynthesis; L-arginine from L-ornithine and carbamoyl phosphate: step 3/3.</text>
</comment>
<comment type="subcellular location">
    <subcellularLocation>
        <location evidence="1">Cytoplasm</location>
    </subcellularLocation>
</comment>
<comment type="similarity">
    <text evidence="1">Belongs to the lyase 1 family. Argininosuccinate lyase subfamily.</text>
</comment>
<feature type="chain" id="PRO_1000116349" description="Argininosuccinate lyase">
    <location>
        <begin position="1"/>
        <end position="467"/>
    </location>
</feature>
<evidence type="ECO:0000255" key="1">
    <source>
        <dbReference type="HAMAP-Rule" id="MF_00006"/>
    </source>
</evidence>